<protein>
    <recommendedName>
        <fullName>Cytochrome c oxidase subunit 1</fullName>
        <ecNumber>7.1.1.9</ecNumber>
    </recommendedName>
    <alternativeName>
        <fullName>Cytochrome c oxidase polypeptide I</fullName>
    </alternativeName>
</protein>
<gene>
    <name type="primary">COI</name>
</gene>
<evidence type="ECO:0000250" key="1">
    <source>
        <dbReference type="UniProtKB" id="P00396"/>
    </source>
</evidence>
<evidence type="ECO:0000250" key="2">
    <source>
        <dbReference type="UniProtKB" id="P00401"/>
    </source>
</evidence>
<evidence type="ECO:0000255" key="3"/>
<evidence type="ECO:0000305" key="4"/>
<feature type="chain" id="PRO_0000183309" description="Cytochrome c oxidase subunit 1">
    <location>
        <begin position="1"/>
        <end position="513"/>
    </location>
</feature>
<feature type="transmembrane region" description="Helical" evidence="3">
    <location>
        <begin position="16"/>
        <end position="36"/>
    </location>
</feature>
<feature type="transmembrane region" description="Helical" evidence="3">
    <location>
        <begin position="62"/>
        <end position="82"/>
    </location>
</feature>
<feature type="transmembrane region" description="Helical" evidence="3">
    <location>
        <begin position="101"/>
        <end position="121"/>
    </location>
</feature>
<feature type="transmembrane region" description="Helical" evidence="3">
    <location>
        <begin position="144"/>
        <end position="164"/>
    </location>
</feature>
<feature type="transmembrane region" description="Helical" evidence="3">
    <location>
        <begin position="182"/>
        <end position="202"/>
    </location>
</feature>
<feature type="transmembrane region" description="Helical" evidence="3">
    <location>
        <begin position="233"/>
        <end position="253"/>
    </location>
</feature>
<feature type="transmembrane region" description="Helical" evidence="3">
    <location>
        <begin position="267"/>
        <end position="287"/>
    </location>
</feature>
<feature type="transmembrane region" description="Helical" evidence="3">
    <location>
        <begin position="304"/>
        <end position="324"/>
    </location>
</feature>
<feature type="transmembrane region" description="Helical" evidence="3">
    <location>
        <begin position="337"/>
        <end position="357"/>
    </location>
</feature>
<feature type="transmembrane region" description="Helical" evidence="3">
    <location>
        <begin position="384"/>
        <end position="404"/>
    </location>
</feature>
<feature type="transmembrane region" description="Helical" evidence="3">
    <location>
        <begin position="413"/>
        <end position="433"/>
    </location>
</feature>
<feature type="transmembrane region" description="Helical" evidence="3">
    <location>
        <begin position="451"/>
        <end position="471"/>
    </location>
</feature>
<feature type="binding site" evidence="2">
    <location>
        <position position="39"/>
    </location>
    <ligand>
        <name>Ca(2+)</name>
        <dbReference type="ChEBI" id="CHEBI:29108"/>
    </ligand>
</feature>
<feature type="binding site" evidence="2">
    <location>
        <position position="44"/>
    </location>
    <ligand>
        <name>Ca(2+)</name>
        <dbReference type="ChEBI" id="CHEBI:29108"/>
    </ligand>
</feature>
<feature type="binding site" description="axial binding residue" evidence="2">
    <location>
        <position position="60"/>
    </location>
    <ligand>
        <name>Fe(II)-heme a</name>
        <dbReference type="ChEBI" id="CHEBI:61715"/>
        <note>low-spin</note>
    </ligand>
    <ligandPart>
        <name>Fe</name>
        <dbReference type="ChEBI" id="CHEBI:18248"/>
    </ligandPart>
</feature>
<feature type="binding site" evidence="2">
    <location>
        <position position="239"/>
    </location>
    <ligand>
        <name>Cu cation</name>
        <dbReference type="ChEBI" id="CHEBI:23378"/>
        <label>B</label>
    </ligand>
</feature>
<feature type="binding site" evidence="1">
    <location>
        <position position="243"/>
    </location>
    <ligand>
        <name>O2</name>
        <dbReference type="ChEBI" id="CHEBI:15379"/>
    </ligand>
</feature>
<feature type="binding site" evidence="2">
    <location>
        <position position="289"/>
    </location>
    <ligand>
        <name>Cu cation</name>
        <dbReference type="ChEBI" id="CHEBI:23378"/>
        <label>B</label>
    </ligand>
</feature>
<feature type="binding site" evidence="2">
    <location>
        <position position="290"/>
    </location>
    <ligand>
        <name>Cu cation</name>
        <dbReference type="ChEBI" id="CHEBI:23378"/>
        <label>B</label>
    </ligand>
</feature>
<feature type="binding site" evidence="2">
    <location>
        <position position="367"/>
    </location>
    <ligand>
        <name>Mg(2+)</name>
        <dbReference type="ChEBI" id="CHEBI:18420"/>
        <note>ligand shared with subunit 2</note>
    </ligand>
</feature>
<feature type="binding site" evidence="2">
    <location>
        <position position="368"/>
    </location>
    <ligand>
        <name>Mg(2+)</name>
        <dbReference type="ChEBI" id="CHEBI:18420"/>
        <note>ligand shared with subunit 2</note>
    </ligand>
</feature>
<feature type="binding site" description="axial binding residue" evidence="2">
    <location>
        <position position="375"/>
    </location>
    <ligand>
        <name>heme a3</name>
        <dbReference type="ChEBI" id="CHEBI:83282"/>
        <note>high-spin</note>
    </ligand>
    <ligandPart>
        <name>Fe</name>
        <dbReference type="ChEBI" id="CHEBI:18248"/>
    </ligandPart>
</feature>
<feature type="binding site" description="axial binding residue" evidence="2">
    <location>
        <position position="377"/>
    </location>
    <ligand>
        <name>Fe(II)-heme a</name>
        <dbReference type="ChEBI" id="CHEBI:61715"/>
        <note>low-spin</note>
    </ligand>
    <ligandPart>
        <name>Fe</name>
        <dbReference type="ChEBI" id="CHEBI:18248"/>
    </ligandPart>
</feature>
<feature type="cross-link" description="1'-histidyl-3'-tyrosine (His-Tyr)" evidence="2">
    <location>
        <begin position="239"/>
        <end position="243"/>
    </location>
</feature>
<organism>
    <name type="scientific">Choristoneura fumiferana</name>
    <name type="common">Spruce budworm moth</name>
    <name type="synonym">Archips fumiferana</name>
    <dbReference type="NCBI Taxonomy" id="7141"/>
    <lineage>
        <taxon>Eukaryota</taxon>
        <taxon>Metazoa</taxon>
        <taxon>Ecdysozoa</taxon>
        <taxon>Arthropoda</taxon>
        <taxon>Hexapoda</taxon>
        <taxon>Insecta</taxon>
        <taxon>Pterygota</taxon>
        <taxon>Neoptera</taxon>
        <taxon>Endopterygota</taxon>
        <taxon>Lepidoptera</taxon>
        <taxon>Glossata</taxon>
        <taxon>Ditrysia</taxon>
        <taxon>Tortricoidea</taxon>
        <taxon>Tortricidae</taxon>
        <taxon>Tortricinae</taxon>
        <taxon>Choristoneura</taxon>
    </lineage>
</organism>
<sequence length="513" mass="57033">MMRKWLYSTNHKDIGTLYFMFGIWAGMVGTSLSLLIRAELGNPGSLIGDDQIYNTIVTAHAFIMIFFMVMPIMIGGFGNWLVPLMLGAPDMAFPRMNNMSFWLLPPSIMLLISSSIVENGAGTGWTVYPPLSSNIAHSGSSVDLAIFSLHLAGISSILGAVNFITTIINMRPNNMSLDQMPLFVWSVGITALLLLLSLPVLAGAITMLLTDRNLNTSFFDPAGGGDPILYQHLFWFFGHPEVYILILPGFGMISHIISQESGKKETFGCLGMIYAMMAIGLLGFVVWAHHMFTVGMDIDTRAYFTSATMIIAVPTGIKIFSWLATLHGTQINYSPSMLWSLGFVFLFTVGGLTGVILANSSIDVTLHDTYYVVAHFHYVLSMGAVFAIMGGFVHWYPLFTGLALNPYLLKIQFFTMFIGVNLTFFPQHFLGLAGMPRRYSDYPDTYTSWNIISSLGSYISLVATMLMLMIIWESLINKRIILFPLNMNSSIEWYQNLPPAEHSYNELPILSNF</sequence>
<name>COX1_CHOFU</name>
<accession>P50669</accession>
<dbReference type="EC" id="7.1.1.9"/>
<dbReference type="EMBL" id="L19098">
    <property type="protein sequence ID" value="AAA53640.2"/>
    <property type="molecule type" value="Genomic_DNA"/>
</dbReference>
<dbReference type="SMR" id="P50669"/>
<dbReference type="UniPathway" id="UPA00705"/>
<dbReference type="GO" id="GO:0005743">
    <property type="term" value="C:mitochondrial inner membrane"/>
    <property type="evidence" value="ECO:0007669"/>
    <property type="project" value="UniProtKB-SubCell"/>
</dbReference>
<dbReference type="GO" id="GO:0045277">
    <property type="term" value="C:respiratory chain complex IV"/>
    <property type="evidence" value="ECO:0007669"/>
    <property type="project" value="InterPro"/>
</dbReference>
<dbReference type="GO" id="GO:0004129">
    <property type="term" value="F:cytochrome-c oxidase activity"/>
    <property type="evidence" value="ECO:0007669"/>
    <property type="project" value="UniProtKB-EC"/>
</dbReference>
<dbReference type="GO" id="GO:0020037">
    <property type="term" value="F:heme binding"/>
    <property type="evidence" value="ECO:0007669"/>
    <property type="project" value="InterPro"/>
</dbReference>
<dbReference type="GO" id="GO:0046872">
    <property type="term" value="F:metal ion binding"/>
    <property type="evidence" value="ECO:0007669"/>
    <property type="project" value="UniProtKB-KW"/>
</dbReference>
<dbReference type="GO" id="GO:0015990">
    <property type="term" value="P:electron transport coupled proton transport"/>
    <property type="evidence" value="ECO:0007669"/>
    <property type="project" value="TreeGrafter"/>
</dbReference>
<dbReference type="GO" id="GO:0006123">
    <property type="term" value="P:mitochondrial electron transport, cytochrome c to oxygen"/>
    <property type="evidence" value="ECO:0007669"/>
    <property type="project" value="TreeGrafter"/>
</dbReference>
<dbReference type="CDD" id="cd01663">
    <property type="entry name" value="Cyt_c_Oxidase_I"/>
    <property type="match status" value="1"/>
</dbReference>
<dbReference type="FunFam" id="1.20.210.10:FF:000001">
    <property type="entry name" value="Cytochrome c oxidase subunit 1"/>
    <property type="match status" value="1"/>
</dbReference>
<dbReference type="Gene3D" id="1.20.210.10">
    <property type="entry name" value="Cytochrome c oxidase-like, subunit I domain"/>
    <property type="match status" value="1"/>
</dbReference>
<dbReference type="InterPro" id="IPR023616">
    <property type="entry name" value="Cyt_c_oxase-like_su1_dom"/>
</dbReference>
<dbReference type="InterPro" id="IPR036927">
    <property type="entry name" value="Cyt_c_oxase-like_su1_sf"/>
</dbReference>
<dbReference type="InterPro" id="IPR000883">
    <property type="entry name" value="Cyt_C_Oxase_1"/>
</dbReference>
<dbReference type="InterPro" id="IPR023615">
    <property type="entry name" value="Cyt_c_Oxase_su1_BS"/>
</dbReference>
<dbReference type="InterPro" id="IPR033944">
    <property type="entry name" value="Cyt_c_oxase_su1_dom"/>
</dbReference>
<dbReference type="PANTHER" id="PTHR10422">
    <property type="entry name" value="CYTOCHROME C OXIDASE SUBUNIT 1"/>
    <property type="match status" value="1"/>
</dbReference>
<dbReference type="PANTHER" id="PTHR10422:SF18">
    <property type="entry name" value="CYTOCHROME C OXIDASE SUBUNIT 1"/>
    <property type="match status" value="1"/>
</dbReference>
<dbReference type="Pfam" id="PF00115">
    <property type="entry name" value="COX1"/>
    <property type="match status" value="1"/>
</dbReference>
<dbReference type="PRINTS" id="PR01165">
    <property type="entry name" value="CYCOXIDASEI"/>
</dbReference>
<dbReference type="SUPFAM" id="SSF81442">
    <property type="entry name" value="Cytochrome c oxidase subunit I-like"/>
    <property type="match status" value="1"/>
</dbReference>
<dbReference type="PROSITE" id="PS50855">
    <property type="entry name" value="COX1"/>
    <property type="match status" value="1"/>
</dbReference>
<dbReference type="PROSITE" id="PS00077">
    <property type="entry name" value="COX1_CUB"/>
    <property type="match status" value="1"/>
</dbReference>
<keyword id="KW-0106">Calcium</keyword>
<keyword id="KW-0186">Copper</keyword>
<keyword id="KW-0249">Electron transport</keyword>
<keyword id="KW-0349">Heme</keyword>
<keyword id="KW-0408">Iron</keyword>
<keyword id="KW-0460">Magnesium</keyword>
<keyword id="KW-0472">Membrane</keyword>
<keyword id="KW-0479">Metal-binding</keyword>
<keyword id="KW-0496">Mitochondrion</keyword>
<keyword id="KW-0999">Mitochondrion inner membrane</keyword>
<keyword id="KW-0679">Respiratory chain</keyword>
<keyword id="KW-1278">Translocase</keyword>
<keyword id="KW-0812">Transmembrane</keyword>
<keyword id="KW-1133">Transmembrane helix</keyword>
<keyword id="KW-0813">Transport</keyword>
<reference key="1">
    <citation type="submission" date="2006-05" db="EMBL/GenBank/DDBJ databases">
        <authorList>
            <person name="Roe A."/>
            <person name="Sperling F.A.H."/>
        </authorList>
    </citation>
    <scope>NUCLEOTIDE SEQUENCE [GENOMIC DNA]</scope>
</reference>
<reference key="2">
    <citation type="journal article" date="1994" name="Mol. Biol. Evol.">
        <title>Mitochondrial DNA sequence variation in the spruce budworm species complex (Choristoneura: Lepidoptera).</title>
        <authorList>
            <person name="Sperling F.A.H."/>
            <person name="Hickey D.A."/>
        </authorList>
    </citation>
    <scope>NUCLEOTIDE SEQUENCE [GENOMIC DNA] OF 240-513</scope>
    <source>
        <strain>37</strain>
    </source>
</reference>
<geneLocation type="mitochondrion"/>
<comment type="function">
    <text evidence="2">Component of the cytochrome c oxidase, the last enzyme in the mitochondrial electron transport chain which drives oxidative phosphorylation. The respiratory chain contains 3 multisubunit complexes succinate dehydrogenase (complex II, CII), ubiquinol-cytochrome c oxidoreductase (cytochrome b-c1 complex, complex III, CIII) and cytochrome c oxidase (complex IV, CIV), that cooperate to transfer electrons derived from NADH and succinate to molecular oxygen, creating an electrochemical gradient over the inner membrane that drives transmembrane transport and the ATP synthase. Cytochrome c oxidase is the component of the respiratory chain that catalyzes the reduction of oxygen to water. Electrons originating from reduced cytochrome c in the intermembrane space (IMS) are transferred via the dinuclear copper A center (CU(A)) of subunit 2 and heme A of subunit 1 to the active site in subunit 1, a binuclear center (BNC) formed by heme A3 and copper B (CU(B)). The BNC reduces molecular oxygen to 2 water molecules using 4 electrons from cytochrome c in the IMS and 4 protons from the mitochondrial matrix.</text>
</comment>
<comment type="catalytic activity">
    <reaction evidence="2">
        <text>4 Fe(II)-[cytochrome c] + O2 + 8 H(+)(in) = 4 Fe(III)-[cytochrome c] + 2 H2O + 4 H(+)(out)</text>
        <dbReference type="Rhea" id="RHEA:11436"/>
        <dbReference type="Rhea" id="RHEA-COMP:10350"/>
        <dbReference type="Rhea" id="RHEA-COMP:14399"/>
        <dbReference type="ChEBI" id="CHEBI:15377"/>
        <dbReference type="ChEBI" id="CHEBI:15378"/>
        <dbReference type="ChEBI" id="CHEBI:15379"/>
        <dbReference type="ChEBI" id="CHEBI:29033"/>
        <dbReference type="ChEBI" id="CHEBI:29034"/>
        <dbReference type="EC" id="7.1.1.9"/>
    </reaction>
    <physiologicalReaction direction="left-to-right" evidence="2">
        <dbReference type="Rhea" id="RHEA:11437"/>
    </physiologicalReaction>
</comment>
<comment type="cofactor">
    <cofactor evidence="2">
        <name>heme</name>
        <dbReference type="ChEBI" id="CHEBI:30413"/>
    </cofactor>
    <text evidence="2">Binds 2 heme A groups non-covalently per subunit.</text>
</comment>
<comment type="cofactor">
    <cofactor evidence="2">
        <name>Cu cation</name>
        <dbReference type="ChEBI" id="CHEBI:23378"/>
    </cofactor>
    <text evidence="2">Binds a copper B center.</text>
</comment>
<comment type="pathway">
    <text evidence="2">Energy metabolism; oxidative phosphorylation.</text>
</comment>
<comment type="subunit">
    <text evidence="2">Component of the cytochrome c oxidase (complex IV, CIV), a multisubunit enzyme composed of a catalytic core of 3 subunits and several supernumerary subunits. The complex exists as a monomer or a dimer and forms supercomplexes (SCs) in the inner mitochondrial membrane with ubiquinol-cytochrome c oxidoreductase (cytochrome b-c1 complex, complex III, CIII).</text>
</comment>
<comment type="subcellular location">
    <subcellularLocation>
        <location evidence="2">Mitochondrion inner membrane</location>
        <topology evidence="2">Multi-pass membrane protein</topology>
    </subcellularLocation>
</comment>
<comment type="similarity">
    <text evidence="4">Belongs to the heme-copper respiratory oxidase family.</text>
</comment>
<proteinExistence type="inferred from homology"/>